<gene>
    <name evidence="1" type="primary">glyQ</name>
    <name type="ordered locus">mlr7434</name>
</gene>
<proteinExistence type="inferred from homology"/>
<protein>
    <recommendedName>
        <fullName evidence="1">Glycine--tRNA ligase alpha subunit</fullName>
        <ecNumber evidence="1">6.1.1.14</ecNumber>
    </recommendedName>
    <alternativeName>
        <fullName evidence="1">Glycyl-tRNA synthetase alpha subunit</fullName>
        <shortName evidence="1">GlyRS</shortName>
    </alternativeName>
</protein>
<reference key="1">
    <citation type="journal article" date="2000" name="DNA Res.">
        <title>Complete genome structure of the nitrogen-fixing symbiotic bacterium Mesorhizobium loti.</title>
        <authorList>
            <person name="Kaneko T."/>
            <person name="Nakamura Y."/>
            <person name="Sato S."/>
            <person name="Asamizu E."/>
            <person name="Kato T."/>
            <person name="Sasamoto S."/>
            <person name="Watanabe A."/>
            <person name="Idesawa K."/>
            <person name="Ishikawa A."/>
            <person name="Kawashima K."/>
            <person name="Kimura T."/>
            <person name="Kishida Y."/>
            <person name="Kiyokawa C."/>
            <person name="Kohara M."/>
            <person name="Matsumoto M."/>
            <person name="Matsuno A."/>
            <person name="Mochizuki Y."/>
            <person name="Nakayama S."/>
            <person name="Nakazaki N."/>
            <person name="Shimpo S."/>
            <person name="Sugimoto M."/>
            <person name="Takeuchi C."/>
            <person name="Yamada M."/>
            <person name="Tabata S."/>
        </authorList>
    </citation>
    <scope>NUCLEOTIDE SEQUENCE [LARGE SCALE GENOMIC DNA]</scope>
    <source>
        <strain>LMG 29417 / CECT 9101 / MAFF 303099</strain>
    </source>
</reference>
<name>SYGA_RHILO</name>
<dbReference type="EC" id="6.1.1.14" evidence="1"/>
<dbReference type="EMBL" id="BA000012">
    <property type="protein sequence ID" value="BAB53537.1"/>
    <property type="molecule type" value="Genomic_DNA"/>
</dbReference>
<dbReference type="SMR" id="Q986B6"/>
<dbReference type="KEGG" id="mlo:mlr7434"/>
<dbReference type="eggNOG" id="COG0752">
    <property type="taxonomic scope" value="Bacteria"/>
</dbReference>
<dbReference type="HOGENOM" id="CLU_057066_1_0_5"/>
<dbReference type="Proteomes" id="UP000000552">
    <property type="component" value="Chromosome"/>
</dbReference>
<dbReference type="GO" id="GO:0005829">
    <property type="term" value="C:cytosol"/>
    <property type="evidence" value="ECO:0007669"/>
    <property type="project" value="TreeGrafter"/>
</dbReference>
<dbReference type="GO" id="GO:0005524">
    <property type="term" value="F:ATP binding"/>
    <property type="evidence" value="ECO:0007669"/>
    <property type="project" value="UniProtKB-UniRule"/>
</dbReference>
<dbReference type="GO" id="GO:0004820">
    <property type="term" value="F:glycine-tRNA ligase activity"/>
    <property type="evidence" value="ECO:0007669"/>
    <property type="project" value="UniProtKB-UniRule"/>
</dbReference>
<dbReference type="GO" id="GO:0006426">
    <property type="term" value="P:glycyl-tRNA aminoacylation"/>
    <property type="evidence" value="ECO:0007669"/>
    <property type="project" value="UniProtKB-UniRule"/>
</dbReference>
<dbReference type="CDD" id="cd00733">
    <property type="entry name" value="GlyRS_alpha_core"/>
    <property type="match status" value="1"/>
</dbReference>
<dbReference type="FunFam" id="3.30.930.10:FF:000006">
    <property type="entry name" value="Glycine--tRNA ligase alpha subunit"/>
    <property type="match status" value="1"/>
</dbReference>
<dbReference type="Gene3D" id="3.30.930.10">
    <property type="entry name" value="Bira Bifunctional Protein, Domain 2"/>
    <property type="match status" value="1"/>
</dbReference>
<dbReference type="Gene3D" id="1.20.58.180">
    <property type="entry name" value="Class II aaRS and biotin synthetases, domain 2"/>
    <property type="match status" value="1"/>
</dbReference>
<dbReference type="HAMAP" id="MF_00254">
    <property type="entry name" value="Gly_tRNA_synth_alpha"/>
    <property type="match status" value="1"/>
</dbReference>
<dbReference type="InterPro" id="IPR045864">
    <property type="entry name" value="aa-tRNA-synth_II/BPL/LPL"/>
</dbReference>
<dbReference type="InterPro" id="IPR006194">
    <property type="entry name" value="Gly-tRNA-synth_heterodimer"/>
</dbReference>
<dbReference type="InterPro" id="IPR002310">
    <property type="entry name" value="Gly-tRNA_ligase_asu"/>
</dbReference>
<dbReference type="NCBIfam" id="TIGR00388">
    <property type="entry name" value="glyQ"/>
    <property type="match status" value="1"/>
</dbReference>
<dbReference type="NCBIfam" id="NF006827">
    <property type="entry name" value="PRK09348.1"/>
    <property type="match status" value="1"/>
</dbReference>
<dbReference type="PANTHER" id="PTHR30075:SF2">
    <property type="entry name" value="GLYCINE--TRNA LIGASE, CHLOROPLASTIC_MITOCHONDRIAL 2"/>
    <property type="match status" value="1"/>
</dbReference>
<dbReference type="PANTHER" id="PTHR30075">
    <property type="entry name" value="GLYCYL-TRNA SYNTHETASE"/>
    <property type="match status" value="1"/>
</dbReference>
<dbReference type="Pfam" id="PF02091">
    <property type="entry name" value="tRNA-synt_2e"/>
    <property type="match status" value="1"/>
</dbReference>
<dbReference type="PRINTS" id="PR01044">
    <property type="entry name" value="TRNASYNTHGA"/>
</dbReference>
<dbReference type="SUPFAM" id="SSF55681">
    <property type="entry name" value="Class II aaRS and biotin synthetases"/>
    <property type="match status" value="1"/>
</dbReference>
<dbReference type="PROSITE" id="PS50861">
    <property type="entry name" value="AA_TRNA_LIGASE_II_GLYAB"/>
    <property type="match status" value="1"/>
</dbReference>
<feature type="chain" id="PRO_0000072858" description="Glycine--tRNA ligase alpha subunit">
    <location>
        <begin position="1"/>
        <end position="314"/>
    </location>
</feature>
<evidence type="ECO:0000255" key="1">
    <source>
        <dbReference type="HAMAP-Rule" id="MF_00254"/>
    </source>
</evidence>
<accession>Q986B6</accession>
<organism>
    <name type="scientific">Mesorhizobium japonicum (strain LMG 29417 / CECT 9101 / MAFF 303099)</name>
    <name type="common">Mesorhizobium loti (strain MAFF 303099)</name>
    <dbReference type="NCBI Taxonomy" id="266835"/>
    <lineage>
        <taxon>Bacteria</taxon>
        <taxon>Pseudomonadati</taxon>
        <taxon>Pseudomonadota</taxon>
        <taxon>Alphaproteobacteria</taxon>
        <taxon>Hyphomicrobiales</taxon>
        <taxon>Phyllobacteriaceae</taxon>
        <taxon>Mesorhizobium</taxon>
    </lineage>
</organism>
<keyword id="KW-0030">Aminoacyl-tRNA synthetase</keyword>
<keyword id="KW-0067">ATP-binding</keyword>
<keyword id="KW-0963">Cytoplasm</keyword>
<keyword id="KW-0436">Ligase</keyword>
<keyword id="KW-0547">Nucleotide-binding</keyword>
<keyword id="KW-0648">Protein biosynthesis</keyword>
<comment type="catalytic activity">
    <reaction evidence="1">
        <text>tRNA(Gly) + glycine + ATP = glycyl-tRNA(Gly) + AMP + diphosphate</text>
        <dbReference type="Rhea" id="RHEA:16013"/>
        <dbReference type="Rhea" id="RHEA-COMP:9664"/>
        <dbReference type="Rhea" id="RHEA-COMP:9683"/>
        <dbReference type="ChEBI" id="CHEBI:30616"/>
        <dbReference type="ChEBI" id="CHEBI:33019"/>
        <dbReference type="ChEBI" id="CHEBI:57305"/>
        <dbReference type="ChEBI" id="CHEBI:78442"/>
        <dbReference type="ChEBI" id="CHEBI:78522"/>
        <dbReference type="ChEBI" id="CHEBI:456215"/>
        <dbReference type="EC" id="6.1.1.14"/>
    </reaction>
</comment>
<comment type="subunit">
    <text evidence="1">Tetramer of two alpha and two beta subunits.</text>
</comment>
<comment type="subcellular location">
    <subcellularLocation>
        <location evidence="1">Cytoplasm</location>
    </subcellularLocation>
</comment>
<comment type="similarity">
    <text evidence="1">Belongs to the class-II aminoacyl-tRNA synthetase family.</text>
</comment>
<sequence length="314" mass="35267">MTIEIPAHMHPSRSFQGLILTLHNYWAAYGCVILQPYDMEVGAGTFHPATTLRALGPKRWNAAYVQPSRRPKDGRYGENPNRLQHYYQYQVILKPNPPNLQELYLGSLAAIGVDPLLHDIRFVEDDWESPTLGAWGLGWECWCDGMEVSQFTYFQQVCGIECAPVAGELTYGLERLAMYVQGVDNVYDLNFNGREGADKVTYGDVFLQAEQEYSRHNFEYADTAMLLRHFEDAEAECKALLDAGAPASNDNLPMHKMVFPAYDQCIKASHVFNLLDARGVISVTERQSYILRVRNLAKACGEAFLKTQAGGLAA</sequence>